<comment type="subcellular location">
    <subcellularLocation>
        <location evidence="1">Periplasm</location>
    </subcellularLocation>
</comment>
<comment type="similarity">
    <text evidence="3">Belongs to the TolB family.</text>
</comment>
<name>TOLB_CHLMU</name>
<evidence type="ECO:0000250" key="1">
    <source>
        <dbReference type="UniProtKB" id="P0A855"/>
    </source>
</evidence>
<evidence type="ECO:0000255" key="2"/>
<evidence type="ECO:0000305" key="3"/>
<organism>
    <name type="scientific">Chlamydia muridarum (strain MoPn / Nigg)</name>
    <dbReference type="NCBI Taxonomy" id="243161"/>
    <lineage>
        <taxon>Bacteria</taxon>
        <taxon>Pseudomonadati</taxon>
        <taxon>Chlamydiota</taxon>
        <taxon>Chlamydiia</taxon>
        <taxon>Chlamydiales</taxon>
        <taxon>Chlamydiaceae</taxon>
        <taxon>Chlamydia/Chlamydophila group</taxon>
        <taxon>Chlamydia</taxon>
    </lineage>
</organism>
<keyword id="KW-0574">Periplasm</keyword>
<keyword id="KW-0732">Signal</keyword>
<feature type="signal peptide" evidence="2">
    <location>
        <begin position="1"/>
        <end position="19"/>
    </location>
</feature>
<feature type="chain" id="PRO_0000034639" description="Protein TolB homolog" evidence="2">
    <location>
        <begin position="20"/>
        <end position="426"/>
    </location>
</feature>
<proteinExistence type="inferred from homology"/>
<protein>
    <recommendedName>
        <fullName evidence="3">Protein TolB homolog</fullName>
    </recommendedName>
</protein>
<accession>Q9PJE1</accession>
<reference key="1">
    <citation type="journal article" date="2000" name="Nucleic Acids Res.">
        <title>Genome sequences of Chlamydia trachomatis MoPn and Chlamydia pneumoniae AR39.</title>
        <authorList>
            <person name="Read T.D."/>
            <person name="Brunham R.C."/>
            <person name="Shen C."/>
            <person name="Gill S.R."/>
            <person name="Heidelberg J.F."/>
            <person name="White O."/>
            <person name="Hickey E.K."/>
            <person name="Peterson J.D."/>
            <person name="Utterback T.R."/>
            <person name="Berry K.J."/>
            <person name="Bass S."/>
            <person name="Linher K.D."/>
            <person name="Weidman J.F."/>
            <person name="Khouri H.M."/>
            <person name="Craven B."/>
            <person name="Bowman C."/>
            <person name="Dodson R.J."/>
            <person name="Gwinn M.L."/>
            <person name="Nelson W.C."/>
            <person name="DeBoy R.T."/>
            <person name="Kolonay J.F."/>
            <person name="McClarty G."/>
            <person name="Salzberg S.L."/>
            <person name="Eisen J.A."/>
            <person name="Fraser C.M."/>
        </authorList>
    </citation>
    <scope>NUCLEOTIDE SEQUENCE [LARGE SCALE GENOMIC DNA]</scope>
    <source>
        <strain>MoPn / Nigg</strain>
    </source>
</reference>
<gene>
    <name type="ordered locus">TC_0888</name>
</gene>
<sequence>MFLRSFLCLLCLLPSILYCADLEIHVRAESSLLPVNVSLLSSPKDTKQGSYLASLRDLFARDLALGDLLAPTKEIAPLTVFIEASYPELIFSIKKDGKGAQKIFSLELSGNPSKDHQSIHEAADRIHFLLTHTPGISSGKIIFSLCSTNSSEELKQGELWSVDYDGQHLAPLTNEHSLSVTPAWMHISHIPAYIYVSYKLGVPKIFLNTLSQPTGKKILAMQGNQFMPAFSPKTKLLAFISDRDGNPDLFVQSFSLATGAIGTPKKLLNEAFGTQGNPSFSPDGTRLVFVSNKDGTPRIYQMQIYPEQHPPRLLTKKYRNSSCPTWSPDGKKIAFCSVIKGVRQICVYDLASGRDEQLTTSAEHKESPSWAADSNHLVYSAGSSSTSELFLLSLITKKSRKIVIGSGEKRFPCWGAFPSQHIKKAS</sequence>
<dbReference type="EMBL" id="AE002160">
    <property type="protein sequence ID" value="AAF39683.1"/>
    <property type="molecule type" value="Genomic_DNA"/>
</dbReference>
<dbReference type="PIR" id="F81653">
    <property type="entry name" value="F81653"/>
</dbReference>
<dbReference type="SMR" id="Q9PJE1"/>
<dbReference type="GeneID" id="1246256"/>
<dbReference type="KEGG" id="cmu:TC_0888"/>
<dbReference type="eggNOG" id="COG0823">
    <property type="taxonomic scope" value="Bacteria"/>
</dbReference>
<dbReference type="HOGENOM" id="CLU_635688_0_0_0"/>
<dbReference type="OrthoDB" id="108903at2"/>
<dbReference type="Proteomes" id="UP000000800">
    <property type="component" value="Chromosome"/>
</dbReference>
<dbReference type="GO" id="GO:0042597">
    <property type="term" value="C:periplasmic space"/>
    <property type="evidence" value="ECO:0007669"/>
    <property type="project" value="UniProtKB-SubCell"/>
</dbReference>
<dbReference type="Gene3D" id="2.120.10.30">
    <property type="entry name" value="TolB, C-terminal domain"/>
    <property type="match status" value="1"/>
</dbReference>
<dbReference type="InterPro" id="IPR011042">
    <property type="entry name" value="6-blade_b-propeller_TolB-like"/>
</dbReference>
<dbReference type="InterPro" id="IPR011659">
    <property type="entry name" value="PD40"/>
</dbReference>
<dbReference type="NCBIfam" id="NF002183">
    <property type="entry name" value="PRK01029.1"/>
    <property type="match status" value="1"/>
</dbReference>
<dbReference type="PANTHER" id="PTHR36842:SF1">
    <property type="entry name" value="PROTEIN TOLB"/>
    <property type="match status" value="1"/>
</dbReference>
<dbReference type="PANTHER" id="PTHR36842">
    <property type="entry name" value="PROTEIN TOLB HOMOLOG"/>
    <property type="match status" value="1"/>
</dbReference>
<dbReference type="Pfam" id="PF07676">
    <property type="entry name" value="PD40"/>
    <property type="match status" value="4"/>
</dbReference>
<dbReference type="SUPFAM" id="SSF69304">
    <property type="entry name" value="Tricorn protease N-terminal domain"/>
    <property type="match status" value="1"/>
</dbReference>